<protein>
    <recommendedName>
        <fullName evidence="1">Large ribosomal subunit protein uL13</fullName>
    </recommendedName>
    <alternativeName>
        <fullName evidence="2">50S ribosomal protein L13</fullName>
    </alternativeName>
</protein>
<organism>
    <name type="scientific">Shigella dysenteriae serotype 1 (strain Sd197)</name>
    <dbReference type="NCBI Taxonomy" id="300267"/>
    <lineage>
        <taxon>Bacteria</taxon>
        <taxon>Pseudomonadati</taxon>
        <taxon>Pseudomonadota</taxon>
        <taxon>Gammaproteobacteria</taxon>
        <taxon>Enterobacterales</taxon>
        <taxon>Enterobacteriaceae</taxon>
        <taxon>Shigella</taxon>
    </lineage>
</organism>
<keyword id="KW-1185">Reference proteome</keyword>
<keyword id="KW-0687">Ribonucleoprotein</keyword>
<keyword id="KW-0689">Ribosomal protein</keyword>
<comment type="function">
    <text evidence="1">This protein is one of the early assembly proteins of the 50S ribosomal subunit, although it is not seen to bind rRNA by itself. It is important during the early stages of 50S assembly.</text>
</comment>
<comment type="subunit">
    <text evidence="1">Part of the 50S ribosomal subunit.</text>
</comment>
<comment type="similarity">
    <text evidence="1">Belongs to the universal ribosomal protein uL13 family.</text>
</comment>
<name>RL13_SHIDS</name>
<accession>Q32BA8</accession>
<evidence type="ECO:0000255" key="1">
    <source>
        <dbReference type="HAMAP-Rule" id="MF_01366"/>
    </source>
</evidence>
<evidence type="ECO:0000305" key="2"/>
<gene>
    <name evidence="1" type="primary">rplM</name>
    <name type="ordered locus">SDY_3407</name>
</gene>
<feature type="chain" id="PRO_0000261799" description="Large ribosomal subunit protein uL13">
    <location>
        <begin position="1"/>
        <end position="142"/>
    </location>
</feature>
<proteinExistence type="inferred from homology"/>
<sequence>MKTFTAKPETVKRDWYVVDATGKTLGRLATELARRLRGKHKAEYTPHVDTGDYIIVLNADKVAVTGNKRTDKVYYHHTGHIGGIKQATFEEMIARRPERVIEIAVKGMLPKGPLGRAMSRKLKVYAGNEHNHAAQQPQVLDI</sequence>
<dbReference type="EMBL" id="CP000034">
    <property type="protein sequence ID" value="ABB63397.1"/>
    <property type="molecule type" value="Genomic_DNA"/>
</dbReference>
<dbReference type="RefSeq" id="WP_005018883.1">
    <property type="nucleotide sequence ID" value="NC_007606.1"/>
</dbReference>
<dbReference type="RefSeq" id="YP_404888.1">
    <property type="nucleotide sequence ID" value="NC_007606.1"/>
</dbReference>
<dbReference type="SMR" id="Q32BA8"/>
<dbReference type="STRING" id="300267.SDY_3407"/>
<dbReference type="EnsemblBacteria" id="ABB63397">
    <property type="protein sequence ID" value="ABB63397"/>
    <property type="gene ID" value="SDY_3407"/>
</dbReference>
<dbReference type="KEGG" id="sdy:SDY_3407"/>
<dbReference type="PATRIC" id="fig|300267.13.peg.4065"/>
<dbReference type="HOGENOM" id="CLU_082184_2_2_6"/>
<dbReference type="Proteomes" id="UP000002716">
    <property type="component" value="Chromosome"/>
</dbReference>
<dbReference type="GO" id="GO:0022625">
    <property type="term" value="C:cytosolic large ribosomal subunit"/>
    <property type="evidence" value="ECO:0007669"/>
    <property type="project" value="TreeGrafter"/>
</dbReference>
<dbReference type="GO" id="GO:0003729">
    <property type="term" value="F:mRNA binding"/>
    <property type="evidence" value="ECO:0007669"/>
    <property type="project" value="TreeGrafter"/>
</dbReference>
<dbReference type="GO" id="GO:0003735">
    <property type="term" value="F:structural constituent of ribosome"/>
    <property type="evidence" value="ECO:0007669"/>
    <property type="project" value="InterPro"/>
</dbReference>
<dbReference type="GO" id="GO:0017148">
    <property type="term" value="P:negative regulation of translation"/>
    <property type="evidence" value="ECO:0007669"/>
    <property type="project" value="TreeGrafter"/>
</dbReference>
<dbReference type="GO" id="GO:0006412">
    <property type="term" value="P:translation"/>
    <property type="evidence" value="ECO:0007669"/>
    <property type="project" value="UniProtKB-UniRule"/>
</dbReference>
<dbReference type="CDD" id="cd00392">
    <property type="entry name" value="Ribosomal_L13"/>
    <property type="match status" value="1"/>
</dbReference>
<dbReference type="FunFam" id="3.90.1180.10:FF:000001">
    <property type="entry name" value="50S ribosomal protein L13"/>
    <property type="match status" value="1"/>
</dbReference>
<dbReference type="Gene3D" id="3.90.1180.10">
    <property type="entry name" value="Ribosomal protein L13"/>
    <property type="match status" value="1"/>
</dbReference>
<dbReference type="HAMAP" id="MF_01366">
    <property type="entry name" value="Ribosomal_uL13"/>
    <property type="match status" value="1"/>
</dbReference>
<dbReference type="InterPro" id="IPR005822">
    <property type="entry name" value="Ribosomal_uL13"/>
</dbReference>
<dbReference type="InterPro" id="IPR005823">
    <property type="entry name" value="Ribosomal_uL13_bac-type"/>
</dbReference>
<dbReference type="InterPro" id="IPR023563">
    <property type="entry name" value="Ribosomal_uL13_CS"/>
</dbReference>
<dbReference type="InterPro" id="IPR036899">
    <property type="entry name" value="Ribosomal_uL13_sf"/>
</dbReference>
<dbReference type="NCBIfam" id="TIGR01066">
    <property type="entry name" value="rplM_bact"/>
    <property type="match status" value="1"/>
</dbReference>
<dbReference type="PANTHER" id="PTHR11545:SF2">
    <property type="entry name" value="LARGE RIBOSOMAL SUBUNIT PROTEIN UL13M"/>
    <property type="match status" value="1"/>
</dbReference>
<dbReference type="PANTHER" id="PTHR11545">
    <property type="entry name" value="RIBOSOMAL PROTEIN L13"/>
    <property type="match status" value="1"/>
</dbReference>
<dbReference type="Pfam" id="PF00572">
    <property type="entry name" value="Ribosomal_L13"/>
    <property type="match status" value="1"/>
</dbReference>
<dbReference type="PIRSF" id="PIRSF002181">
    <property type="entry name" value="Ribosomal_L13"/>
    <property type="match status" value="1"/>
</dbReference>
<dbReference type="SUPFAM" id="SSF52161">
    <property type="entry name" value="Ribosomal protein L13"/>
    <property type="match status" value="1"/>
</dbReference>
<dbReference type="PROSITE" id="PS00783">
    <property type="entry name" value="RIBOSOMAL_L13"/>
    <property type="match status" value="1"/>
</dbReference>
<reference key="1">
    <citation type="journal article" date="2005" name="Nucleic Acids Res.">
        <title>Genome dynamics and diversity of Shigella species, the etiologic agents of bacillary dysentery.</title>
        <authorList>
            <person name="Yang F."/>
            <person name="Yang J."/>
            <person name="Zhang X."/>
            <person name="Chen L."/>
            <person name="Jiang Y."/>
            <person name="Yan Y."/>
            <person name="Tang X."/>
            <person name="Wang J."/>
            <person name="Xiong Z."/>
            <person name="Dong J."/>
            <person name="Xue Y."/>
            <person name="Zhu Y."/>
            <person name="Xu X."/>
            <person name="Sun L."/>
            <person name="Chen S."/>
            <person name="Nie H."/>
            <person name="Peng J."/>
            <person name="Xu J."/>
            <person name="Wang Y."/>
            <person name="Yuan Z."/>
            <person name="Wen Y."/>
            <person name="Yao Z."/>
            <person name="Shen Y."/>
            <person name="Qiang B."/>
            <person name="Hou Y."/>
            <person name="Yu J."/>
            <person name="Jin Q."/>
        </authorList>
    </citation>
    <scope>NUCLEOTIDE SEQUENCE [LARGE SCALE GENOMIC DNA]</scope>
    <source>
        <strain>Sd197</strain>
    </source>
</reference>